<protein>
    <recommendedName>
        <fullName evidence="14">Acetylcholine receptor subunit epsilon</fullName>
    </recommendedName>
</protein>
<gene>
    <name evidence="15" type="primary">CHRNE</name>
    <name type="synonym">ACHRE</name>
</gene>
<organism>
    <name type="scientific">Homo sapiens</name>
    <name type="common">Human</name>
    <dbReference type="NCBI Taxonomy" id="9606"/>
    <lineage>
        <taxon>Eukaryota</taxon>
        <taxon>Metazoa</taxon>
        <taxon>Chordata</taxon>
        <taxon>Craniata</taxon>
        <taxon>Vertebrata</taxon>
        <taxon>Euteleostomi</taxon>
        <taxon>Mammalia</taxon>
        <taxon>Eutheria</taxon>
        <taxon>Euarchontoglires</taxon>
        <taxon>Primates</taxon>
        <taxon>Haplorrhini</taxon>
        <taxon>Catarrhini</taxon>
        <taxon>Hominidae</taxon>
        <taxon>Homo</taxon>
    </lineage>
</organism>
<keyword id="KW-1003">Cell membrane</keyword>
<keyword id="KW-1004">Congenital myasthenic syndrome</keyword>
<keyword id="KW-0225">Disease variant</keyword>
<keyword id="KW-1015">Disulfide bond</keyword>
<keyword id="KW-0325">Glycoprotein</keyword>
<keyword id="KW-0407">Ion channel</keyword>
<keyword id="KW-0406">Ion transport</keyword>
<keyword id="KW-1071">Ligand-gated ion channel</keyword>
<keyword id="KW-0472">Membrane</keyword>
<keyword id="KW-0628">Postsynaptic cell membrane</keyword>
<keyword id="KW-0675">Receptor</keyword>
<keyword id="KW-1185">Reference proteome</keyword>
<keyword id="KW-0732">Signal</keyword>
<keyword id="KW-0770">Synapse</keyword>
<keyword id="KW-0812">Transmembrane</keyword>
<keyword id="KW-1133">Transmembrane helix</keyword>
<keyword id="KW-0813">Transport</keyword>
<comment type="function">
    <text evidence="8">After binding acetylcholine, the AChR responds by an extensive change in conformation that affects all subunits and leads to opening of an ion-conducting channel across the plasma membrane.</text>
</comment>
<comment type="catalytic activity">
    <reaction evidence="2">
        <text>K(+)(in) = K(+)(out)</text>
        <dbReference type="Rhea" id="RHEA:29463"/>
        <dbReference type="ChEBI" id="CHEBI:29103"/>
    </reaction>
</comment>
<comment type="catalytic activity">
    <reaction evidence="2">
        <text>Na(+)(in) = Na(+)(out)</text>
        <dbReference type="Rhea" id="RHEA:34963"/>
        <dbReference type="ChEBI" id="CHEBI:29101"/>
    </reaction>
</comment>
<comment type="subunit">
    <text evidence="6">Pentamer of two alpha chains, and one each of the beta, delta, and gamma (in immature muscle) or epsilon (in mature muscle) chains. The muscle heteropentamer composed of alpha-1, beta-1, delta, epsilon subunits interacts with the alpha-conotoxin ImII (PubMed:15609996).</text>
</comment>
<comment type="subcellular location">
    <subcellularLocation>
        <location>Postsynaptic cell membrane</location>
        <topology>Multi-pass membrane protein</topology>
    </subcellularLocation>
    <subcellularLocation>
        <location>Cell membrane</location>
        <topology>Multi-pass membrane protein</topology>
    </subcellularLocation>
</comment>
<comment type="disease">
    <text>The muscle AChR is the major target antigen in the autoimmune disease myasthenia gravis. Myasthenia gravis is characterized by sporadic muscular fatigability and weakness, occurring chiefly in muscles innervated by cranial nerves, and characteristically improved by cholinesterase-inhibiting drugs.</text>
</comment>
<comment type="disease" evidence="5 8 9 10 12">
    <disease id="DI-04397">
        <name>Myasthenic syndrome, congenital, 4A, slow-channel</name>
        <acronym>CMS4A</acronym>
        <description>A form of congenital myasthenic syndrome, a group of disorders characterized by failure of neuromuscular transmission, including pre-synaptic, synaptic, and post-synaptic disorders that are not of autoimmune origin. Clinical features are easy fatigability and muscle weakness affecting the axial and limb muscles (with hypotonia in early-onset forms), the ocular muscles (leading to ptosis and ophthalmoplegia), and the facial and bulbar musculature (affecting sucking and swallowing, and leading to dysphonia). The symptoms fluctuate and worsen with physical effort. CMS4A is a slow-channel myasthenic syndrome. It is caused by kinetic abnormalities of the AChR, resulting in prolonged AChR channel opening episodes, prolonged endplate currents, and depolarization block. This is associated with calcium overload, which may contribute to subsequent degeneration of the endplate and postsynaptic membrane.</description>
        <dbReference type="MIM" id="605809"/>
    </disease>
    <text>The disease is caused by variants affecting the gene represented in this entry.</text>
</comment>
<comment type="disease" evidence="4 7 11">
    <disease id="DI-04396">
        <name>Myasthenic syndrome, congenital, 4B, fast-channel</name>
        <acronym>CMS4B</acronym>
        <description>A form of congenital myasthenic syndrome, a group of disorders characterized by failure of neuromuscular transmission, including pre-synaptic, synaptic, and post-synaptic disorders that are not of autoimmune origin. Clinical features are easy fatigability and muscle weakness affecting the axial and limb muscles (with hypotonia in early-onset forms), the ocular muscles (leading to ptosis and ophthalmoplegia), and the facial and bulbar musculature (affecting sucking and swallowing, and leading to dysphonia). The symptoms fluctuate and worsen with physical effort. CMS4B is a fast-channel myasthenic syndrome. It is caused by kinetic abnormalities of the AChR, resulting in brief opening and activity of the channel, with a rapid decay in endplate current, failure to achieve threshold depolarization of the endplate and consequent failure to fire an action potential.</description>
        <dbReference type="MIM" id="616324"/>
    </disease>
    <text>The disease is caused by variants affecting the gene represented in this entry.</text>
</comment>
<comment type="disease" evidence="13">
    <disease id="DI-00369">
        <name>Myasthenic syndrome, congenital, 4C, associated with acetylcholine receptor deficiency</name>
        <acronym>CMS4C</acronym>
        <description>A form of congenital myasthenic syndrome, a group of disorders characterized by failure of neuromuscular transmission, including pre-synaptic, synaptic, and post-synaptic disorders that are not of autoimmune origin. Clinical features are easy fatigability and muscle weakness affecting the axial and limb muscles (with hypotonia in early-onset forms), the ocular muscles (leading to ptosis and ophthalmoplegia), and the facial and bulbar musculature (affecting sucking and swallowing, and leading to dysphonia). The symptoms fluctuate and worsen with physical effort. CMS4C is an autosomal recessive disorder of postsynaptic neuromuscular transmission, due to deficiency of AChR at the endplate that results in low amplitude of the miniature endplate potential and current.</description>
        <dbReference type="MIM" id="608931"/>
    </disease>
    <text>The disease is caused by variants affecting the gene represented in this entry.</text>
</comment>
<comment type="similarity">
    <text evidence="14">Belongs to the ligand-gated ion channel (TC 1.A.9) family. Acetylcholine receptor (TC 1.A.9.1) subfamily. Epsilon/CHRNE sub-subfamily.</text>
</comment>
<reference key="1">
    <citation type="journal article" date="1993" name="Eur. J. Biochem.">
        <title>Primary structure of the human muscle acetylcholine receptor. cDNA cloning of the gamma and epsilon subunits.</title>
        <authorList>
            <person name="Beeson D.M.W."/>
            <person name="Brydson M."/>
            <person name="Betty M."/>
            <person name="Jeremiah S."/>
            <person name="Povey S."/>
            <person name="Vincent A."/>
            <person name="Newsom-Davis J."/>
        </authorList>
    </citation>
    <scope>NUCLEOTIDE SEQUENCE [MRNA]</scope>
    <source>
        <tissue>Muscle fibroblast</tissue>
    </source>
</reference>
<reference key="2">
    <citation type="submission" date="1998-11" db="EMBL/GenBank/DDBJ databases">
        <authorList>
            <person name="Abicht A."/>
            <person name="Stucka R."/>
            <person name="Lochmuller H."/>
        </authorList>
    </citation>
    <scope>NUCLEOTIDE SEQUENCE [GENOMIC DNA]</scope>
</reference>
<reference key="3">
    <citation type="submission" date="2005-09" db="EMBL/GenBank/DDBJ databases">
        <authorList>
            <person name="Mural R.J."/>
            <person name="Istrail S."/>
            <person name="Sutton G.G."/>
            <person name="Florea L."/>
            <person name="Halpern A.L."/>
            <person name="Mobarry C.M."/>
            <person name="Lippert R."/>
            <person name="Walenz B."/>
            <person name="Shatkay H."/>
            <person name="Dew I."/>
            <person name="Miller J.R."/>
            <person name="Flanigan M.J."/>
            <person name="Edwards N.J."/>
            <person name="Bolanos R."/>
            <person name="Fasulo D."/>
            <person name="Halldorsson B.V."/>
            <person name="Hannenhalli S."/>
            <person name="Turner R."/>
            <person name="Yooseph S."/>
            <person name="Lu F."/>
            <person name="Nusskern D.R."/>
            <person name="Shue B.C."/>
            <person name="Zheng X.H."/>
            <person name="Zhong F."/>
            <person name="Delcher A.L."/>
            <person name="Huson D.H."/>
            <person name="Kravitz S.A."/>
            <person name="Mouchard L."/>
            <person name="Reinert K."/>
            <person name="Remington K.A."/>
            <person name="Clark A.G."/>
            <person name="Waterman M.S."/>
            <person name="Eichler E.E."/>
            <person name="Adams M.D."/>
            <person name="Hunkapiller M.W."/>
            <person name="Myers E.W."/>
            <person name="Venter J.C."/>
        </authorList>
    </citation>
    <scope>NUCLEOTIDE SEQUENCE [LARGE SCALE GENOMIC DNA]</scope>
</reference>
<reference key="4">
    <citation type="journal article" date="2004" name="Biochemistry">
        <title>Alpha-conotoxins ImI and ImII target distinct regions of the human alpha7 nicotinic acetylcholine receptor and distinguish human nicotinic receptor subtypes.</title>
        <authorList>
            <person name="Ellison M."/>
            <person name="Gao F."/>
            <person name="Wang H.L."/>
            <person name="Sine S.M."/>
            <person name="McIntosh J.M."/>
            <person name="Olivera B.M."/>
        </authorList>
    </citation>
    <scope>SUBUNIT</scope>
</reference>
<reference key="5">
    <citation type="journal article" date="1995" name="Neurology">
        <title>A leucine-to-phenylalanine substitution in the acetylcholine receptor ion channel in a family with the slow-channel syndrome.</title>
        <authorList>
            <person name="Gomez C.M."/>
            <person name="Gammack J.T."/>
        </authorList>
    </citation>
    <scope>VARIANT CMS4A PHE-289</scope>
</reference>
<reference key="6">
    <citation type="journal article" date="1995" name="Proc. Natl. Acad. Sci. U.S.A.">
        <title>Congenital myasthenic syndrome caused by prolonged acetylcholine receptor channel openings due to a mutation in the M2 domain of the epsilon subunit.</title>
        <authorList>
            <person name="Ohno K."/>
            <person name="Hutchinson D.O."/>
            <person name="Milone M."/>
            <person name="Brengman J.M."/>
            <person name="Bouzat C."/>
            <person name="Sine S.M."/>
            <person name="Engel A.G."/>
        </authorList>
    </citation>
    <scope>VARIANT CMS4A PRO-284</scope>
    <scope>CHARACTERIZATION OF VARIANT CMS4A PRO-284</scope>
</reference>
<reference key="7">
    <citation type="journal article" date="1996" name="Hum. Mol. Genet.">
        <title>New mutations in acetylcholine receptor subunit genes reveal heterogeneity in the slow-channel congenital myasthenic syndrome.</title>
        <authorList>
            <person name="Engel A.G."/>
            <person name="Ohno K."/>
            <person name="Milone M."/>
            <person name="Wang H.-L."/>
            <person name="Nakano S."/>
            <person name="Bouzat C."/>
            <person name="Pruitt J.N. II"/>
            <person name="Hutchinson D.O."/>
            <person name="Brengman J.M."/>
            <person name="Bren N."/>
            <person name="Sieb J.P."/>
            <person name="Sine S.M."/>
        </authorList>
    </citation>
    <scope>VARIANT CMS4A PHE-289</scope>
    <scope>CHARACTERIZATION OF VARIANT CMS4A PHE-289</scope>
</reference>
<reference key="8">
    <citation type="journal article" date="1996" name="Neuron">
        <title>Congenital myasthenic syndrome caused by decreased agonist binding affinity due to a mutation in the acetylcholine receptor epsilon subunit.</title>
        <authorList>
            <person name="Ohno K."/>
            <person name="Wang H.-L."/>
            <person name="Milone M."/>
            <person name="Bren N."/>
            <person name="Brengman J.M."/>
            <person name="Nakano S."/>
            <person name="Quiram P."/>
            <person name="Pruitt J.N. II"/>
            <person name="Sine S.M."/>
            <person name="Engel A.G."/>
        </authorList>
    </citation>
    <scope>VARIANTS CMS4B ARG-13; LEU-141 AND LEU-163</scope>
    <scope>CHARACTERIZATION OF VARIANTS CMS4B ARG-13; LEU-141 AND LEU-163</scope>
</reference>
<reference key="9">
    <citation type="journal article" date="1997" name="Hum. Mol. Genet.">
        <title>Congenital myasthenic syndromes due to heteroallelic nonsense/missense mutations in the acetylcholine receptor epsilon subunit gene: identification and functional characterization of six new mutations.</title>
        <authorList>
            <person name="Ohno K."/>
            <person name="Quiram P.A."/>
            <person name="Milone M."/>
            <person name="Wang H.-L."/>
            <person name="Harper M.C."/>
            <person name="Pruitt J.N. II"/>
            <person name="Brengman J.M."/>
            <person name="Pao L."/>
            <person name="Fischbeck K.H."/>
            <person name="Crawford T.O."/>
            <person name="Sine S.M."/>
            <person name="Engel A.G."/>
        </authorList>
    </citation>
    <scope>VARIANTS CMS4C LEU-167; LEU-265 AND TRP-331</scope>
    <scope>CHARACTERIZATION OF VARIANTS CMS4C LEU-167; LEU-265 AND TRP-331</scope>
</reference>
<reference key="10">
    <citation type="journal article" date="2000" name="J. Gen. Physiol.">
        <title>Fundamental gating mechanism of nicotinic receptor channel revealed by mutation causing a congenital myasthenic syndrome.</title>
        <authorList>
            <person name="Wang H.-L."/>
            <person name="Ohno K."/>
            <person name="Milone M."/>
            <person name="Brengman J.M."/>
            <person name="Evoli A."/>
            <person name="Batocchi A.-P."/>
            <person name="Middleton L.T."/>
            <person name="Christodoulou K."/>
            <person name="Engel A.G."/>
            <person name="Sine S.M."/>
        </authorList>
    </citation>
    <scope>VARIANT CMS4B PRO-431</scope>
    <scope>CHARACTERIZATION OF VARIANT CMS4B PRO-431</scope>
</reference>
<reference key="11">
    <citation type="journal article" date="2002" name="Neurology">
        <title>Recessive inheritance and variable penetrance of slow-channel congenital myasthenic syndromes.</title>
        <authorList>
            <person name="Croxen R."/>
            <person name="Hatton C."/>
            <person name="Shelley C."/>
            <person name="Brydson M."/>
            <person name="Chauplannaz G."/>
            <person name="Oosterhuis H."/>
            <person name="Vincent A."/>
            <person name="Newsom-Davis J."/>
            <person name="Colquhoun D."/>
            <person name="Beeson D."/>
        </authorList>
    </citation>
    <scope>VARIANTS CMS4A PRO-98 AND PHE-241</scope>
</reference>
<reference key="12">
    <citation type="journal article" date="2012" name="Neurology">
        <title>Highly fatal fast-channel syndrome caused by AChR epsilon subunit mutation at the agonist binding site.</title>
        <authorList>
            <person name="Shen X.M."/>
            <person name="Brengman J.M."/>
            <person name="Edvardson S."/>
            <person name="Sine S.M."/>
            <person name="Engel A.G."/>
        </authorList>
    </citation>
    <scope>VARIANT CMS4B ARG-75</scope>
    <scope>CHARACTERIZATION OF VARIANT CMS4B ARG-75</scope>
</reference>
<reference key="13">
    <citation type="journal article" date="2016" name="Hum. Mutat.">
        <title>Mutations causing slow-channel myasthenia reveal that a valine ring in the channel pore of muscle AChR is optimized for stabilizing channel gating.</title>
        <authorList>
            <person name="Shen X.M."/>
            <person name="Okuno T."/>
            <person name="Milone M."/>
            <person name="Otsuka K."/>
            <person name="Takahashi K."/>
            <person name="Komaki H."/>
            <person name="Giles E."/>
            <person name="Ohno K."/>
            <person name="Engel A.G."/>
        </authorList>
    </citation>
    <scope>VARIANT CMS4A ALA-285</scope>
    <scope>CHARACTERIZATION OF VARIANT CMS4A ALA-285</scope>
    <scope>FUNCTION</scope>
</reference>
<evidence type="ECO:0000250" key="1"/>
<evidence type="ECO:0000250" key="2">
    <source>
        <dbReference type="UniProtKB" id="P02715"/>
    </source>
</evidence>
<evidence type="ECO:0000255" key="3"/>
<evidence type="ECO:0000269" key="4">
    <source>
    </source>
</evidence>
<evidence type="ECO:0000269" key="5">
    <source>
    </source>
</evidence>
<evidence type="ECO:0000269" key="6">
    <source>
    </source>
</evidence>
<evidence type="ECO:0000269" key="7">
    <source>
    </source>
</evidence>
<evidence type="ECO:0000269" key="8">
    <source>
    </source>
</evidence>
<evidence type="ECO:0000269" key="9">
    <source>
    </source>
</evidence>
<evidence type="ECO:0000269" key="10">
    <source>
    </source>
</evidence>
<evidence type="ECO:0000269" key="11">
    <source>
    </source>
</evidence>
<evidence type="ECO:0000269" key="12">
    <source>
    </source>
</evidence>
<evidence type="ECO:0000269" key="13">
    <source>
    </source>
</evidence>
<evidence type="ECO:0000305" key="14"/>
<evidence type="ECO:0000312" key="15">
    <source>
        <dbReference type="HGNC" id="HGNC:1966"/>
    </source>
</evidence>
<sequence>MARAPLGVLLLLGLLGRGVGKNEELRLYHHLFNNYDPGSRPVREPEDTVTISLKVTLTNLISLNEKEETLTTSVWIGIDWQDYRLNYSKDDFGGIETLRVPSELVWLPEIVLENNIDGQFGVAYDANVLVYEGGSVTWLPPAIYRSVCAVEVTYFPFDWQNCSLIFRSQTYNAEEVEFTFAVDNDGKTINKIDIDTEAYTENGEWAIDFCPGVIRRHHGGATDGPGETDVIYSLIIRRKPLFYVINIIVPCVLISGLVLLAYFLPAQAGGQKCTVSINVLLAQTVFLFLIAQKIPETSLSVPLLGRFLIFVMVVATLIVMNCVIVLNVSQRTPTTHAMSPRLRHVLLELLPRLLGSPPPPEAPRAASPPRRASSVGLLLRAEELILKKPRSELVFEGQRHRQGTWTAAFCQSLGAAAPEVRCCVDAVNFVAESTRDQEATGEEVSDWVRMGNALDNICFWAALVLFSVGSSLIFLGAYFNRVPDLPYAPCIQP</sequence>
<name>ACHE_HUMAN</name>
<dbReference type="EMBL" id="X66403">
    <property type="protein sequence ID" value="CAA47030.1"/>
    <property type="molecule type" value="mRNA"/>
</dbReference>
<dbReference type="EMBL" id="AF105999">
    <property type="protein sequence ID" value="AAD24503.1"/>
    <property type="molecule type" value="Genomic_DNA"/>
</dbReference>
<dbReference type="EMBL" id="CH471108">
    <property type="protein sequence ID" value="EAW90395.1"/>
    <property type="molecule type" value="Genomic_DNA"/>
</dbReference>
<dbReference type="EMBL" id="CH471108">
    <property type="protein sequence ID" value="EAW90396.1"/>
    <property type="molecule type" value="Genomic_DNA"/>
</dbReference>
<dbReference type="CCDS" id="CCDS11058.1"/>
<dbReference type="PIR" id="S34775">
    <property type="entry name" value="S34775"/>
</dbReference>
<dbReference type="RefSeq" id="NP_000071.1">
    <property type="nucleotide sequence ID" value="NM_000080.4"/>
</dbReference>
<dbReference type="SMR" id="Q04844"/>
<dbReference type="BioGRID" id="107567">
    <property type="interactions" value="35"/>
</dbReference>
<dbReference type="ComplexPortal" id="CPX-255">
    <property type="entry name" value="Muscle-type nicotinic acetylcholine receptor complex, alpha1-beta1-delta-epsilon"/>
</dbReference>
<dbReference type="CORUM" id="Q04844"/>
<dbReference type="FunCoup" id="Q04844">
    <property type="interactions" value="396"/>
</dbReference>
<dbReference type="IntAct" id="Q04844">
    <property type="interactions" value="27"/>
</dbReference>
<dbReference type="STRING" id="9606.ENSP00000497829"/>
<dbReference type="BindingDB" id="Q04844"/>
<dbReference type="ChEMBL" id="CHEMBL2484"/>
<dbReference type="DrugCentral" id="Q04844"/>
<dbReference type="TCDB" id="1.A.9.1.1">
    <property type="family name" value="the neurotransmitter receptor, cys loop, ligand-gated ion channel (lic) family"/>
</dbReference>
<dbReference type="GlyCosmos" id="Q04844">
    <property type="glycosylation" value="2 sites, No reported glycans"/>
</dbReference>
<dbReference type="GlyGen" id="Q04844">
    <property type="glycosylation" value="2 sites"/>
</dbReference>
<dbReference type="iPTMnet" id="Q04844"/>
<dbReference type="PhosphoSitePlus" id="Q04844"/>
<dbReference type="BioMuta" id="CHRNE"/>
<dbReference type="DMDM" id="1168301"/>
<dbReference type="jPOST" id="Q04844"/>
<dbReference type="PaxDb" id="9606-ENSP00000293780"/>
<dbReference type="PeptideAtlas" id="Q04844"/>
<dbReference type="ProteomicsDB" id="58287"/>
<dbReference type="ABCD" id="Q04844">
    <property type="antibodies" value="1 sequenced antibody"/>
</dbReference>
<dbReference type="Antibodypedia" id="11366">
    <property type="antibodies" value="176 antibodies from 28 providers"/>
</dbReference>
<dbReference type="DNASU" id="1145"/>
<dbReference type="Ensembl" id="ENST00000649488.2">
    <property type="protein sequence ID" value="ENSP00000497829.1"/>
    <property type="gene ID" value="ENSG00000108556.10"/>
</dbReference>
<dbReference type="GeneID" id="1145"/>
<dbReference type="KEGG" id="hsa:1145"/>
<dbReference type="MANE-Select" id="ENST00000649488.2">
    <property type="protein sequence ID" value="ENSP00000497829.1"/>
    <property type="RefSeq nucleotide sequence ID" value="NM_000080.4"/>
    <property type="RefSeq protein sequence ID" value="NP_000071.1"/>
</dbReference>
<dbReference type="UCSC" id="uc002fzk.2">
    <property type="organism name" value="human"/>
</dbReference>
<dbReference type="AGR" id="HGNC:1966"/>
<dbReference type="CTD" id="1145"/>
<dbReference type="DisGeNET" id="1145"/>
<dbReference type="GeneCards" id="CHRNE"/>
<dbReference type="GeneReviews" id="CHRNE"/>
<dbReference type="HGNC" id="HGNC:1966">
    <property type="gene designation" value="CHRNE"/>
</dbReference>
<dbReference type="HPA" id="ENSG00000108556">
    <property type="expression patterns" value="Group enriched (heart muscle, pituitary gland)"/>
</dbReference>
<dbReference type="MalaCards" id="CHRNE"/>
<dbReference type="MIM" id="100725">
    <property type="type" value="gene"/>
</dbReference>
<dbReference type="MIM" id="254200">
    <property type="type" value="phenotype"/>
</dbReference>
<dbReference type="MIM" id="605809">
    <property type="type" value="phenotype"/>
</dbReference>
<dbReference type="MIM" id="608931">
    <property type="type" value="phenotype"/>
</dbReference>
<dbReference type="MIM" id="616324">
    <property type="type" value="phenotype"/>
</dbReference>
<dbReference type="neXtProt" id="NX_Q04844"/>
<dbReference type="OpenTargets" id="ENSG00000108556"/>
<dbReference type="Orphanet" id="98913">
    <property type="disease" value="Postsynaptic congenital myasthenic syndromes"/>
</dbReference>
<dbReference type="PharmGKB" id="PA26498"/>
<dbReference type="VEuPathDB" id="HostDB:ENSG00000108556"/>
<dbReference type="eggNOG" id="KOG3645">
    <property type="taxonomic scope" value="Eukaryota"/>
</dbReference>
<dbReference type="GeneTree" id="ENSGT00940000160933"/>
<dbReference type="HOGENOM" id="CLU_018074_1_4_1"/>
<dbReference type="InParanoid" id="Q04844"/>
<dbReference type="OMA" id="RKMINTR"/>
<dbReference type="OrthoDB" id="5975154at2759"/>
<dbReference type="PAN-GO" id="Q04844">
    <property type="GO annotations" value="9 GO annotations based on evolutionary models"/>
</dbReference>
<dbReference type="PhylomeDB" id="Q04844"/>
<dbReference type="TreeFam" id="TF315605"/>
<dbReference type="PathwayCommons" id="Q04844"/>
<dbReference type="Reactome" id="R-HSA-629587">
    <property type="pathway name" value="Highly sodium permeable postsynaptic acetylcholine nicotinic receptors"/>
</dbReference>
<dbReference type="SignaLink" id="Q04844"/>
<dbReference type="BioGRID-ORCS" id="1145">
    <property type="hits" value="18 hits in 1155 CRISPR screens"/>
</dbReference>
<dbReference type="ChiTaRS" id="CHRNE">
    <property type="organism name" value="human"/>
</dbReference>
<dbReference type="GeneWiki" id="CHRNE"/>
<dbReference type="GenomeRNAi" id="1145"/>
<dbReference type="Pharos" id="Q04844">
    <property type="development level" value="Tclin"/>
</dbReference>
<dbReference type="PRO" id="PR:Q04844"/>
<dbReference type="Proteomes" id="UP000005640">
    <property type="component" value="Chromosome 17"/>
</dbReference>
<dbReference type="RNAct" id="Q04844">
    <property type="molecule type" value="protein"/>
</dbReference>
<dbReference type="Bgee" id="ENSG00000108556">
    <property type="expression patterns" value="Expressed in right atrium auricular region and 95 other cell types or tissues"/>
</dbReference>
<dbReference type="ExpressionAtlas" id="Q04844">
    <property type="expression patterns" value="baseline and differential"/>
</dbReference>
<dbReference type="GO" id="GO:0005892">
    <property type="term" value="C:acetylcholine-gated channel complex"/>
    <property type="evidence" value="ECO:0000318"/>
    <property type="project" value="GO_Central"/>
</dbReference>
<dbReference type="GO" id="GO:0031594">
    <property type="term" value="C:neuromuscular junction"/>
    <property type="evidence" value="ECO:0000314"/>
    <property type="project" value="SynGO"/>
</dbReference>
<dbReference type="GO" id="GO:0043005">
    <property type="term" value="C:neuron projection"/>
    <property type="evidence" value="ECO:0000318"/>
    <property type="project" value="GO_Central"/>
</dbReference>
<dbReference type="GO" id="GO:0005886">
    <property type="term" value="C:plasma membrane"/>
    <property type="evidence" value="ECO:0000318"/>
    <property type="project" value="GO_Central"/>
</dbReference>
<dbReference type="GO" id="GO:0045211">
    <property type="term" value="C:postsynaptic membrane"/>
    <property type="evidence" value="ECO:0007669"/>
    <property type="project" value="UniProtKB-SubCell"/>
</dbReference>
<dbReference type="GO" id="GO:0045202">
    <property type="term" value="C:synapse"/>
    <property type="evidence" value="ECO:0000318"/>
    <property type="project" value="GO_Central"/>
</dbReference>
<dbReference type="GO" id="GO:0015464">
    <property type="term" value="F:acetylcholine receptor activity"/>
    <property type="evidence" value="ECO:0000318"/>
    <property type="project" value="GO_Central"/>
</dbReference>
<dbReference type="GO" id="GO:0022848">
    <property type="term" value="F:acetylcholine-gated monoatomic cation-selective channel activity"/>
    <property type="evidence" value="ECO:0000318"/>
    <property type="project" value="GO_Central"/>
</dbReference>
<dbReference type="GO" id="GO:0008324">
    <property type="term" value="F:monoatomic cation transmembrane transporter activity"/>
    <property type="evidence" value="ECO:0000304"/>
    <property type="project" value="ProtInc"/>
</dbReference>
<dbReference type="GO" id="GO:1904315">
    <property type="term" value="F:transmitter-gated monoatomic ion channel activity involved in regulation of postsynaptic membrane potential"/>
    <property type="evidence" value="ECO:0000314"/>
    <property type="project" value="SynGO"/>
</dbReference>
<dbReference type="GO" id="GO:0095500">
    <property type="term" value="P:acetylcholine receptor signaling pathway"/>
    <property type="evidence" value="ECO:0000318"/>
    <property type="project" value="GO_Central"/>
</dbReference>
<dbReference type="GO" id="GO:0007268">
    <property type="term" value="P:chemical synaptic transmission"/>
    <property type="evidence" value="ECO:0000318"/>
    <property type="project" value="GO_Central"/>
</dbReference>
<dbReference type="GO" id="GO:0051899">
    <property type="term" value="P:membrane depolarization"/>
    <property type="evidence" value="ECO:0000318"/>
    <property type="project" value="GO_Central"/>
</dbReference>
<dbReference type="GO" id="GO:0034220">
    <property type="term" value="P:monoatomic ion transmembrane transport"/>
    <property type="evidence" value="ECO:0000318"/>
    <property type="project" value="GO_Central"/>
</dbReference>
<dbReference type="GO" id="GO:0006936">
    <property type="term" value="P:muscle contraction"/>
    <property type="evidence" value="ECO:0000304"/>
    <property type="project" value="ProtInc"/>
</dbReference>
<dbReference type="GO" id="GO:0007165">
    <property type="term" value="P:signal transduction"/>
    <property type="evidence" value="ECO:0000304"/>
    <property type="project" value="ProtInc"/>
</dbReference>
<dbReference type="GO" id="GO:0007271">
    <property type="term" value="P:synaptic transmission, cholinergic"/>
    <property type="evidence" value="ECO:0000304"/>
    <property type="project" value="ProtInc"/>
</dbReference>
<dbReference type="CDD" id="cd19030">
    <property type="entry name" value="LGIC_ECD_nAChR_E"/>
    <property type="match status" value="1"/>
</dbReference>
<dbReference type="CDD" id="cd19064">
    <property type="entry name" value="LGIC_TM_nAChR"/>
    <property type="match status" value="1"/>
</dbReference>
<dbReference type="FunFam" id="1.20.58.390:FF:000048">
    <property type="entry name" value="Cholinergic receptor nicotinic epsilon subunit"/>
    <property type="match status" value="1"/>
</dbReference>
<dbReference type="FunFam" id="1.20.58.390:FF:000010">
    <property type="entry name" value="Nicotinic acetylcholine receptor subunit epsilon"/>
    <property type="match status" value="1"/>
</dbReference>
<dbReference type="FunFam" id="2.70.170.10:FF:000012">
    <property type="entry name" value="Nicotinic acetylcholine receptor subunit gamma"/>
    <property type="match status" value="1"/>
</dbReference>
<dbReference type="Gene3D" id="2.70.170.10">
    <property type="entry name" value="Neurotransmitter-gated ion-channel ligand-binding domain"/>
    <property type="match status" value="1"/>
</dbReference>
<dbReference type="Gene3D" id="1.20.58.390">
    <property type="entry name" value="Neurotransmitter-gated ion-channel transmembrane domain"/>
    <property type="match status" value="2"/>
</dbReference>
<dbReference type="InterPro" id="IPR006202">
    <property type="entry name" value="Neur_chan_lig-bd"/>
</dbReference>
<dbReference type="InterPro" id="IPR036734">
    <property type="entry name" value="Neur_chan_lig-bd_sf"/>
</dbReference>
<dbReference type="InterPro" id="IPR006201">
    <property type="entry name" value="Neur_channel"/>
</dbReference>
<dbReference type="InterPro" id="IPR036719">
    <property type="entry name" value="Neuro-gated_channel_TM_sf"/>
</dbReference>
<dbReference type="InterPro" id="IPR038050">
    <property type="entry name" value="Neuro_actylchol_rec"/>
</dbReference>
<dbReference type="InterPro" id="IPR006029">
    <property type="entry name" value="Neurotrans-gated_channel_TM"/>
</dbReference>
<dbReference type="InterPro" id="IPR018000">
    <property type="entry name" value="Neurotransmitter_ion_chnl_CS"/>
</dbReference>
<dbReference type="InterPro" id="IPR002394">
    <property type="entry name" value="Nicotinic_acetylcholine_rcpt"/>
</dbReference>
<dbReference type="PANTHER" id="PTHR18945">
    <property type="entry name" value="NEUROTRANSMITTER GATED ION CHANNEL"/>
    <property type="match status" value="1"/>
</dbReference>
<dbReference type="Pfam" id="PF02931">
    <property type="entry name" value="Neur_chan_LBD"/>
    <property type="match status" value="1"/>
</dbReference>
<dbReference type="Pfam" id="PF02932">
    <property type="entry name" value="Neur_chan_memb"/>
    <property type="match status" value="1"/>
</dbReference>
<dbReference type="PRINTS" id="PR00254">
    <property type="entry name" value="NICOTINICR"/>
</dbReference>
<dbReference type="PRINTS" id="PR00252">
    <property type="entry name" value="NRIONCHANNEL"/>
</dbReference>
<dbReference type="SUPFAM" id="SSF90112">
    <property type="entry name" value="Neurotransmitter-gated ion-channel transmembrane pore"/>
    <property type="match status" value="1"/>
</dbReference>
<dbReference type="SUPFAM" id="SSF63712">
    <property type="entry name" value="Nicotinic receptor ligand binding domain-like"/>
    <property type="match status" value="1"/>
</dbReference>
<dbReference type="PROSITE" id="PS00236">
    <property type="entry name" value="NEUROTR_ION_CHANNEL"/>
    <property type="match status" value="1"/>
</dbReference>
<proteinExistence type="evidence at protein level"/>
<accession>Q04844</accession>
<accession>D3DTK6</accession>
<feature type="signal peptide">
    <location>
        <begin position="1"/>
        <end position="20"/>
    </location>
</feature>
<feature type="chain" id="PRO_0000000329" description="Acetylcholine receptor subunit epsilon">
    <location>
        <begin position="21"/>
        <end position="493"/>
    </location>
</feature>
<feature type="topological domain" description="Extracellular" evidence="3">
    <location>
        <begin position="21"/>
        <end position="239"/>
    </location>
</feature>
<feature type="transmembrane region" description="Helical" evidence="3">
    <location>
        <begin position="240"/>
        <end position="264"/>
    </location>
</feature>
<feature type="topological domain" description="Cytoplasmic" evidence="3">
    <location>
        <begin position="265"/>
        <end position="272"/>
    </location>
</feature>
<feature type="transmembrane region" description="Helical" evidence="3">
    <location>
        <begin position="273"/>
        <end position="291"/>
    </location>
</feature>
<feature type="topological domain" description="Extracellular" evidence="3">
    <location>
        <begin position="292"/>
        <end position="306"/>
    </location>
</feature>
<feature type="transmembrane region" description="Helical" evidence="3">
    <location>
        <begin position="307"/>
        <end position="328"/>
    </location>
</feature>
<feature type="topological domain" description="Cytoplasmic" evidence="3">
    <location>
        <begin position="329"/>
        <end position="456"/>
    </location>
</feature>
<feature type="transmembrane region" description="Helical" evidence="3">
    <location>
        <begin position="457"/>
        <end position="480"/>
    </location>
</feature>
<feature type="topological domain" description="Extracellular" evidence="3">
    <location>
        <begin position="481"/>
        <end position="493"/>
    </location>
</feature>
<feature type="glycosylation site" description="N-linked (GlcNAc...) asparagine" evidence="3">
    <location>
        <position position="86"/>
    </location>
</feature>
<feature type="glycosylation site" description="N-linked (GlcNAc...) asparagine" evidence="3">
    <location>
        <position position="161"/>
    </location>
</feature>
<feature type="disulfide bond" evidence="1">
    <location>
        <begin position="148"/>
        <end position="162"/>
    </location>
</feature>
<feature type="sequence variant" id="VAR_021213" description="In CMS4B; impaired association with alpha CHRNA1 subunit of AChR; dbSNP:rs372635387." evidence="11">
    <original>G</original>
    <variation>R</variation>
    <location>
        <position position="13"/>
    </location>
</feature>
<feature type="sequence variant" id="VAR_048170" description="In dbSNP:rs4790235.">
    <original>G</original>
    <variation>V</variation>
    <location>
        <position position="18"/>
    </location>
</feature>
<feature type="sequence variant" id="VAR_071629" description="In CMS4B; strongly reduces agonist affinity and gating efficiency; dbSNP:rs193919341." evidence="7">
    <original>W</original>
    <variation>R</variation>
    <location>
        <position position="75"/>
    </location>
</feature>
<feature type="sequence variant" id="VAR_019567" description="In CMS4A; rare example of recessive inheritance; dbSNP:rs28929768." evidence="5">
    <original>L</original>
    <variation>P</variation>
    <location>
        <position position="98"/>
    </location>
</feature>
<feature type="sequence variant" id="VAR_000289" description="In CMS4B; marked decrease in rate of AChR channel opening; reduction in frequency of open channel state and resistance to desensitization by ACh; dbSNP:rs121909512." evidence="11">
    <original>P</original>
    <variation>L</variation>
    <location>
        <position position="141"/>
    </location>
</feature>
<feature type="sequence variant" id="VAR_021214" description="In CMS4B; fails to assemble with alpha CHRNA1 subunit of AChR; dbSNP:rs121909516." evidence="11">
    <original>S</original>
    <variation>L</variation>
    <location>
        <position position="163"/>
    </location>
</feature>
<feature type="sequence variant" id="VAR_000290" description="In CMS4C; significantly reduced AChR expression; dbSNP:rs121909514." evidence="13">
    <original>R</original>
    <variation>L</variation>
    <location>
        <position position="167"/>
    </location>
</feature>
<feature type="sequence variant" id="VAR_019568" description="In CMS4A; mild form with variable penetrance; dbSNP:rs28999110." evidence="5">
    <original>L</original>
    <variation>F</variation>
    <location>
        <position position="241"/>
    </location>
</feature>
<feature type="sequence variant" id="VAR_000291" description="In CMS4C; prolongs burst open duration 2-fold by slowing the rate of channel closing; dbSNP:rs759226183." evidence="13">
    <original>P</original>
    <variation>L</variation>
    <location>
        <position position="265"/>
    </location>
</feature>
<feature type="sequence variant" id="VAR_000292" description="In CMS4A; markedly prolonged channel openings in presence of agonist; as well as opening in the absence of agonist; dbSNP:rs121909510." evidence="9">
    <original>T</original>
    <variation>P</variation>
    <location>
        <position position="284"/>
    </location>
</feature>
<feature type="sequence variant" id="VAR_077364" description="In CMS4A; slow-channel mutation; increases gating equilibrium constant by 25-fold, owing to increased opening rate and decreased closing rate; no effect on the choline dissociation rate constant; dbSNP:rs1597618787." evidence="8">
    <original>V</original>
    <variation>A</variation>
    <location>
        <position position="285"/>
    </location>
</feature>
<feature type="sequence variant" id="VAR_000293" description="In CMS4A; slows rate of AChR channel closure and increases apparent affinity for ACh; causes pathologic channel openings even in the absence of ACh resulting in a leaky channel; dbSNP:rs121909511." evidence="10 12">
    <original>L</original>
    <variation>F</variation>
    <location>
        <position position="289"/>
    </location>
</feature>
<feature type="sequence variant" id="VAR_000294" description="In CMS4C; shortens burst duration 2-fold by slowing the rate of channel opening and speeding the rate of ACh dissociation; has a mild fast-channel kinetic effect on the AChR by shortening the long burst and increasing the decay of the endplate current; dbSNP:rs121909515." evidence="13">
    <original>R</original>
    <variation>W</variation>
    <location>
        <position position="331"/>
    </location>
</feature>
<feature type="sequence variant" id="VAR_021215" description="In CMS4B; causes an increase in distributions of rates for channel opening and closing increasing the range of activation kinetics; dbSNP:rs121909517." evidence="4">
    <original>A</original>
    <variation>P</variation>
    <location>
        <position position="431"/>
    </location>
</feature>